<comment type="catalytic activity">
    <reaction evidence="2">
        <text>GTP + H2O = 7,8-dihydroneopterin 3'-triphosphate + formate + H(+)</text>
        <dbReference type="Rhea" id="RHEA:17473"/>
        <dbReference type="ChEBI" id="CHEBI:15377"/>
        <dbReference type="ChEBI" id="CHEBI:15378"/>
        <dbReference type="ChEBI" id="CHEBI:15740"/>
        <dbReference type="ChEBI" id="CHEBI:37565"/>
        <dbReference type="ChEBI" id="CHEBI:58462"/>
        <dbReference type="EC" id="3.5.4.16"/>
    </reaction>
</comment>
<comment type="pathway">
    <text evidence="2">Cofactor biosynthesis; 7,8-dihydroneopterin triphosphate biosynthesis; 7,8-dihydroneopterin triphosphate from GTP: step 1/1.</text>
</comment>
<comment type="subunit">
    <text evidence="1">Toroid-shaped homodecamer, composed of two pentamers of five dimers.</text>
</comment>
<comment type="similarity">
    <text evidence="2">Belongs to the GTP cyclohydrolase I family.</text>
</comment>
<organism>
    <name type="scientific">Methylococcus capsulatus (strain ATCC 33009 / NCIMB 11132 / Bath)</name>
    <dbReference type="NCBI Taxonomy" id="243233"/>
    <lineage>
        <taxon>Bacteria</taxon>
        <taxon>Pseudomonadati</taxon>
        <taxon>Pseudomonadota</taxon>
        <taxon>Gammaproteobacteria</taxon>
        <taxon>Methylococcales</taxon>
        <taxon>Methylococcaceae</taxon>
        <taxon>Methylococcus</taxon>
    </lineage>
</organism>
<reference key="1">
    <citation type="journal article" date="2004" name="PLoS Biol.">
        <title>Genomic insights into methanotrophy: the complete genome sequence of Methylococcus capsulatus (Bath).</title>
        <authorList>
            <person name="Ward N.L."/>
            <person name="Larsen O."/>
            <person name="Sakwa J."/>
            <person name="Bruseth L."/>
            <person name="Khouri H.M."/>
            <person name="Durkin A.S."/>
            <person name="Dimitrov G."/>
            <person name="Jiang L."/>
            <person name="Scanlan D."/>
            <person name="Kang K.H."/>
            <person name="Lewis M.R."/>
            <person name="Nelson K.E."/>
            <person name="Methe B.A."/>
            <person name="Wu M."/>
            <person name="Heidelberg J.F."/>
            <person name="Paulsen I.T."/>
            <person name="Fouts D.E."/>
            <person name="Ravel J."/>
            <person name="Tettelin H."/>
            <person name="Ren Q."/>
            <person name="Read T.D."/>
            <person name="DeBoy R.T."/>
            <person name="Seshadri R."/>
            <person name="Salzberg S.L."/>
            <person name="Jensen H.B."/>
            <person name="Birkeland N.K."/>
            <person name="Nelson W.C."/>
            <person name="Dodson R.J."/>
            <person name="Grindhaug S.H."/>
            <person name="Holt I.E."/>
            <person name="Eidhammer I."/>
            <person name="Jonasen I."/>
            <person name="Vanaken S."/>
            <person name="Utterback T.R."/>
            <person name="Feldblyum T.V."/>
            <person name="Fraser C.M."/>
            <person name="Lillehaug J.R."/>
            <person name="Eisen J.A."/>
        </authorList>
    </citation>
    <scope>NUCLEOTIDE SEQUENCE [LARGE SCALE GENOMIC DNA]</scope>
    <source>
        <strain>ATCC 33009 / NCIMB 11132 / Bath</strain>
    </source>
</reference>
<protein>
    <recommendedName>
        <fullName evidence="2">GTP cyclohydrolase 1</fullName>
        <ecNumber evidence="2">3.5.4.16</ecNumber>
    </recommendedName>
    <alternativeName>
        <fullName evidence="2">GTP cyclohydrolase I</fullName>
        <shortName evidence="2">GTP-CH-I</shortName>
    </alternativeName>
</protein>
<dbReference type="EC" id="3.5.4.16" evidence="2"/>
<dbReference type="EMBL" id="AE017282">
    <property type="protein sequence ID" value="AAU92283.1"/>
    <property type="molecule type" value="Genomic_DNA"/>
</dbReference>
<dbReference type="SMR" id="Q607T5"/>
<dbReference type="STRING" id="243233.MCA1670"/>
<dbReference type="KEGG" id="mca:MCA1670"/>
<dbReference type="eggNOG" id="COG0302">
    <property type="taxonomic scope" value="Bacteria"/>
</dbReference>
<dbReference type="HOGENOM" id="CLU_049768_3_1_6"/>
<dbReference type="UniPathway" id="UPA00848">
    <property type="reaction ID" value="UER00151"/>
</dbReference>
<dbReference type="Proteomes" id="UP000006821">
    <property type="component" value="Chromosome"/>
</dbReference>
<dbReference type="GO" id="GO:0005737">
    <property type="term" value="C:cytoplasm"/>
    <property type="evidence" value="ECO:0007669"/>
    <property type="project" value="TreeGrafter"/>
</dbReference>
<dbReference type="GO" id="GO:0005525">
    <property type="term" value="F:GTP binding"/>
    <property type="evidence" value="ECO:0007669"/>
    <property type="project" value="UniProtKB-KW"/>
</dbReference>
<dbReference type="GO" id="GO:0003934">
    <property type="term" value="F:GTP cyclohydrolase I activity"/>
    <property type="evidence" value="ECO:0007669"/>
    <property type="project" value="UniProtKB-UniRule"/>
</dbReference>
<dbReference type="GO" id="GO:0008270">
    <property type="term" value="F:zinc ion binding"/>
    <property type="evidence" value="ECO:0007669"/>
    <property type="project" value="UniProtKB-UniRule"/>
</dbReference>
<dbReference type="GO" id="GO:0006730">
    <property type="term" value="P:one-carbon metabolic process"/>
    <property type="evidence" value="ECO:0007669"/>
    <property type="project" value="UniProtKB-UniRule"/>
</dbReference>
<dbReference type="GO" id="GO:0006729">
    <property type="term" value="P:tetrahydrobiopterin biosynthetic process"/>
    <property type="evidence" value="ECO:0007669"/>
    <property type="project" value="TreeGrafter"/>
</dbReference>
<dbReference type="GO" id="GO:0046654">
    <property type="term" value="P:tetrahydrofolate biosynthetic process"/>
    <property type="evidence" value="ECO:0007669"/>
    <property type="project" value="UniProtKB-UniRule"/>
</dbReference>
<dbReference type="FunFam" id="3.30.1130.10:FF:000001">
    <property type="entry name" value="GTP cyclohydrolase 1"/>
    <property type="match status" value="1"/>
</dbReference>
<dbReference type="Gene3D" id="1.10.286.10">
    <property type="match status" value="1"/>
</dbReference>
<dbReference type="Gene3D" id="3.30.1130.10">
    <property type="match status" value="1"/>
</dbReference>
<dbReference type="HAMAP" id="MF_00223">
    <property type="entry name" value="FolE"/>
    <property type="match status" value="1"/>
</dbReference>
<dbReference type="InterPro" id="IPR043133">
    <property type="entry name" value="GTP-CH-I_C/QueF"/>
</dbReference>
<dbReference type="InterPro" id="IPR043134">
    <property type="entry name" value="GTP-CH-I_N"/>
</dbReference>
<dbReference type="InterPro" id="IPR001474">
    <property type="entry name" value="GTP_CycHdrlase_I"/>
</dbReference>
<dbReference type="InterPro" id="IPR018234">
    <property type="entry name" value="GTP_CycHdrlase_I_CS"/>
</dbReference>
<dbReference type="InterPro" id="IPR020602">
    <property type="entry name" value="GTP_CycHdrlase_I_dom"/>
</dbReference>
<dbReference type="NCBIfam" id="TIGR00063">
    <property type="entry name" value="folE"/>
    <property type="match status" value="1"/>
</dbReference>
<dbReference type="NCBIfam" id="NF006825">
    <property type="entry name" value="PRK09347.1-2"/>
    <property type="match status" value="1"/>
</dbReference>
<dbReference type="NCBIfam" id="NF006826">
    <property type="entry name" value="PRK09347.1-3"/>
    <property type="match status" value="1"/>
</dbReference>
<dbReference type="PANTHER" id="PTHR11109:SF7">
    <property type="entry name" value="GTP CYCLOHYDROLASE 1"/>
    <property type="match status" value="1"/>
</dbReference>
<dbReference type="PANTHER" id="PTHR11109">
    <property type="entry name" value="GTP CYCLOHYDROLASE I"/>
    <property type="match status" value="1"/>
</dbReference>
<dbReference type="Pfam" id="PF01227">
    <property type="entry name" value="GTP_cyclohydroI"/>
    <property type="match status" value="1"/>
</dbReference>
<dbReference type="SUPFAM" id="SSF55620">
    <property type="entry name" value="Tetrahydrobiopterin biosynthesis enzymes-like"/>
    <property type="match status" value="1"/>
</dbReference>
<dbReference type="PROSITE" id="PS00859">
    <property type="entry name" value="GTP_CYCLOHYDROL_1_1"/>
    <property type="match status" value="1"/>
</dbReference>
<dbReference type="PROSITE" id="PS00860">
    <property type="entry name" value="GTP_CYCLOHYDROL_1_2"/>
    <property type="match status" value="1"/>
</dbReference>
<accession>Q607T5</accession>
<sequence>MHSVMETLFSQLIQEIGEDVSREGLVDTPKRAASAFRFLNSGYHQSLDHVLNNAVFEADSEDMVIVKDIELYSLCEHHLLPFIGKCHVGYLPQGKVIGLSKIARIVEMYARRLQIQERLTKQIADAIQTAVNPRGVAVVVEAKHLCMMMRGVEKQNSVMTTSSMLGLFRKQSSTRAEFLDLIGRK</sequence>
<name>GCH1_METCA</name>
<evidence type="ECO:0000250" key="1"/>
<evidence type="ECO:0000255" key="2">
    <source>
        <dbReference type="HAMAP-Rule" id="MF_00223"/>
    </source>
</evidence>
<feature type="chain" id="PRO_1000043709" description="GTP cyclohydrolase 1">
    <location>
        <begin position="1"/>
        <end position="185"/>
    </location>
</feature>
<feature type="binding site" evidence="2">
    <location>
        <position position="75"/>
    </location>
    <ligand>
        <name>Zn(2+)</name>
        <dbReference type="ChEBI" id="CHEBI:29105"/>
    </ligand>
</feature>
<feature type="binding site" evidence="2">
    <location>
        <position position="78"/>
    </location>
    <ligand>
        <name>Zn(2+)</name>
        <dbReference type="ChEBI" id="CHEBI:29105"/>
    </ligand>
</feature>
<feature type="binding site" evidence="2">
    <location>
        <position position="146"/>
    </location>
    <ligand>
        <name>Zn(2+)</name>
        <dbReference type="ChEBI" id="CHEBI:29105"/>
    </ligand>
</feature>
<keyword id="KW-0342">GTP-binding</keyword>
<keyword id="KW-0378">Hydrolase</keyword>
<keyword id="KW-0479">Metal-binding</keyword>
<keyword id="KW-0547">Nucleotide-binding</keyword>
<keyword id="KW-0554">One-carbon metabolism</keyword>
<keyword id="KW-1185">Reference proteome</keyword>
<keyword id="KW-0862">Zinc</keyword>
<proteinExistence type="inferred from homology"/>
<gene>
    <name evidence="2" type="primary">folE</name>
    <name type="ordered locus">MCA1670</name>
</gene>